<feature type="chain" id="PRO_0000402276" description="Putative DUP240 protein DFP1">
    <location>
        <begin position="1"/>
        <end position="179"/>
    </location>
</feature>
<feature type="transmembrane region" description="Helical" evidence="1">
    <location>
        <begin position="4"/>
        <end position="24"/>
    </location>
</feature>
<feature type="transmembrane region" description="Helical" evidence="1">
    <location>
        <begin position="26"/>
        <end position="46"/>
    </location>
</feature>
<feature type="sequence conflict" description="In Ref. 1; AJ585534, 2 and 3; AAC09488." evidence="2" ref="1 2 3">
    <original>F</original>
    <variation>V</variation>
    <location>
        <position position="20"/>
    </location>
</feature>
<feature type="sequence conflict" description="In Ref. 1; AJ585534, 2; no nucleotide entry and 3; AAC09488." evidence="2" ref="1 2 3">
    <original>F</original>
    <variation>I</variation>
    <location>
        <position position="46"/>
    </location>
</feature>
<organism>
    <name type="scientific">Saccharomyces cerevisiae (strain ATCC 204508 / S288c)</name>
    <name type="common">Baker's yeast</name>
    <dbReference type="NCBI Taxonomy" id="559292"/>
    <lineage>
        <taxon>Eukaryota</taxon>
        <taxon>Fungi</taxon>
        <taxon>Dikarya</taxon>
        <taxon>Ascomycota</taxon>
        <taxon>Saccharomycotina</taxon>
        <taxon>Saccharomycetes</taxon>
        <taxon>Saccharomycetales</taxon>
        <taxon>Saccharomycetaceae</taxon>
        <taxon>Saccharomyces</taxon>
    </lineage>
</organism>
<name>YAJ3_YEAST</name>
<keyword id="KW-0472">Membrane</keyword>
<keyword id="KW-1185">Reference proteome</keyword>
<keyword id="KW-0812">Transmembrane</keyword>
<keyword id="KW-1133">Transmembrane helix</keyword>
<reference key="1">
    <citation type="journal article" date="2004" name="Nucleic Acids Res.">
        <title>Differential evolution of the Saccharomyces cerevisiae DUP240 paralogs and implication of recombination in phylogeny.</title>
        <authorList>
            <person name="Leh-Louis V."/>
            <person name="Wirth B."/>
            <person name="Despons L."/>
            <person name="Wain-Hobson S."/>
            <person name="Potier S."/>
            <person name="Souciet J.-L."/>
        </authorList>
    </citation>
    <scope>NUCLEOTIDE SEQUENCE [GENOMIC DNA]</scope>
    <source>
        <strain>ATCC 204508 / S288c</strain>
    </source>
</reference>
<reference key="2">
    <citation type="submission" date="1994-02" db="EMBL/GenBank/DDBJ databases">
        <title>Sequencing of chromosome I of Saccharomyces cerevisiae: analysis of the 52 Kbp CDC15-FLO1-PHO11-YAR074 region.</title>
        <authorList>
            <person name="Bussey H."/>
            <person name="Keng T."/>
            <person name="Storms R.K."/>
            <person name="Vo D."/>
            <person name="Zhong W."/>
            <person name="Fortin N."/>
            <person name="Barton A.B."/>
            <person name="Kaback D.B."/>
            <person name="Clark M.W."/>
        </authorList>
    </citation>
    <scope>NUCLEOTIDE SEQUENCE [GENOMIC DNA]</scope>
    <source>
        <strain>ATCC 204511 / S288c / AB972</strain>
    </source>
</reference>
<reference key="3">
    <citation type="journal article" date="1995" name="Proc. Natl. Acad. Sci. U.S.A.">
        <title>The nucleotide sequence of chromosome I from Saccharomyces cerevisiae.</title>
        <authorList>
            <person name="Bussey H."/>
            <person name="Kaback D.B."/>
            <person name="Zhong W.-W."/>
            <person name="Vo D.H."/>
            <person name="Clark M.W."/>
            <person name="Fortin N."/>
            <person name="Hall J."/>
            <person name="Ouellette B.F.F."/>
            <person name="Keng T."/>
            <person name="Barton A.B."/>
            <person name="Su Y."/>
            <person name="Davies C.J."/>
            <person name="Storms R.K."/>
        </authorList>
    </citation>
    <scope>NUCLEOTIDE SEQUENCE [LARGE SCALE GENOMIC DNA]</scope>
    <source>
        <strain>ATCC 204508 / S288c</strain>
    </source>
</reference>
<reference key="4">
    <citation type="journal article" date="2014" name="G3 (Bethesda)">
        <title>The reference genome sequence of Saccharomyces cerevisiae: Then and now.</title>
        <authorList>
            <person name="Engel S.R."/>
            <person name="Dietrich F.S."/>
            <person name="Fisk D.G."/>
            <person name="Binkley G."/>
            <person name="Balakrishnan R."/>
            <person name="Costanzo M.C."/>
            <person name="Dwight S.S."/>
            <person name="Hitz B.C."/>
            <person name="Karra K."/>
            <person name="Nash R.S."/>
            <person name="Weng S."/>
            <person name="Wong E.D."/>
            <person name="Lloyd P."/>
            <person name="Skrzypek M.S."/>
            <person name="Miyasato S.R."/>
            <person name="Simison M."/>
            <person name="Cherry J.M."/>
        </authorList>
    </citation>
    <scope>GENOME REANNOTATION</scope>
    <scope>SEQUENCE REVISION TO 20 AND 46</scope>
    <source>
        <strain>ATCC 204508 / S288c</strain>
    </source>
</reference>
<reference key="5">
    <citation type="journal article" date="2005" name="Mol. Biol. Evol.">
        <title>Paleogenomics or the search for remnant duplicated copies of the yeast DUP240 gene family in intergenic areas.</title>
        <authorList>
            <person name="Wirth B."/>
            <person name="Louis V.L."/>
            <person name="Potier S."/>
            <person name="Souciet J.-L."/>
            <person name="Despons L."/>
        </authorList>
    </citation>
    <scope>IDENTIFICATION OF FRAMESHIFT</scope>
</reference>
<accession>D6VPM8</accession>
<accession>P39546</accession>
<accession>Q70DI0</accession>
<accession>Q70DI1</accession>
<accession>Q70DI5</accession>
<accession>Q70DI6</accession>
<accession>Q70DI7</accession>
<accession>Q70DI8</accession>
<accession>Q70DJ1</accession>
<accession>Q70DJ2</accession>
<protein>
    <recommendedName>
        <fullName>Putative DUP240 protein DFP1</fullName>
    </recommendedName>
</protein>
<evidence type="ECO:0000255" key="1"/>
<evidence type="ECO:0000305" key="2"/>
<evidence type="ECO:0000312" key="3">
    <source>
        <dbReference type="SGD" id="S000000074"/>
    </source>
</evidence>
<sequence>MINFLLFVLTILATLTNIWFSGVLSPAMVIRICLGGSMVVLQIWSFSRPISNETFRTKLLLEVITHRPSIAGKEWKTITYNMNQYLFKAGLWKTPYHFFCEHQCYEFFKDLIKGKYPDVQWDTANTQPFISVPENQAATQNSDVEPTVKWCLFKAAEIQAHAVREYWQSQYPDVGIPAI</sequence>
<dbReference type="EMBL" id="AJ585534">
    <property type="status" value="NOT_ANNOTATED_CDS"/>
    <property type="molecule type" value="Genomic_DNA"/>
</dbReference>
<dbReference type="EMBL" id="L28920">
    <property type="protein sequence ID" value="AAC09488.1"/>
    <property type="molecule type" value="Genomic_DNA"/>
</dbReference>
<dbReference type="EMBL" id="BK006935">
    <property type="protein sequence ID" value="DAA06998.2"/>
    <property type="molecule type" value="Genomic_DNA"/>
</dbReference>
<dbReference type="PIR" id="S53469">
    <property type="entry name" value="S53469"/>
</dbReference>
<dbReference type="RefSeq" id="NP_009413.2">
    <property type="nucleotide sequence ID" value="NM_001178220.2"/>
</dbReference>
<dbReference type="BioGRID" id="31803">
    <property type="interactions" value="30"/>
</dbReference>
<dbReference type="FunCoup" id="D6VPM8">
    <property type="interactions" value="19"/>
</dbReference>
<dbReference type="STRING" id="4932.YAR023C"/>
<dbReference type="iPTMnet" id="D6VPM8"/>
<dbReference type="PaxDb" id="4932-YAR023C"/>
<dbReference type="EnsemblFungi" id="YAR023C_mRNA">
    <property type="protein sequence ID" value="YAR023C"/>
    <property type="gene ID" value="YAR023C"/>
</dbReference>
<dbReference type="GeneID" id="851276"/>
<dbReference type="KEGG" id="sce:YAR023C"/>
<dbReference type="AGR" id="SGD:S000000074"/>
<dbReference type="SGD" id="S000000074">
    <property type="gene designation" value="DFP1"/>
</dbReference>
<dbReference type="VEuPathDB" id="FungiDB:YAR023C"/>
<dbReference type="eggNOG" id="ENOG502SSNW">
    <property type="taxonomic scope" value="Eukaryota"/>
</dbReference>
<dbReference type="GeneTree" id="ENSGT00940000176285"/>
<dbReference type="HOGENOM" id="CLU_081384_2_0_1"/>
<dbReference type="InParanoid" id="D6VPM8"/>
<dbReference type="OMA" id="HAVREYW"/>
<dbReference type="OrthoDB" id="4037997at2759"/>
<dbReference type="BioCyc" id="YEAST:G3O-28877-MONOMER"/>
<dbReference type="BioGRID-ORCS" id="851276">
    <property type="hits" value="0 hits in 10 CRISPR screens"/>
</dbReference>
<dbReference type="Proteomes" id="UP000002311">
    <property type="component" value="Chromosome I"/>
</dbReference>
<dbReference type="RNAct" id="D6VPM8">
    <property type="molecule type" value="protein"/>
</dbReference>
<dbReference type="GO" id="GO:0016020">
    <property type="term" value="C:membrane"/>
    <property type="evidence" value="ECO:0007669"/>
    <property type="project" value="UniProtKB-SubCell"/>
</dbReference>
<dbReference type="InterPro" id="IPR001142">
    <property type="entry name" value="DUP/COS"/>
</dbReference>
<dbReference type="Pfam" id="PF00674">
    <property type="entry name" value="DUP"/>
    <property type="match status" value="1"/>
</dbReference>
<comment type="subcellular location">
    <subcellularLocation>
        <location evidence="2">Membrane</location>
        <topology evidence="2">Multi-pass membrane protein</topology>
    </subcellularLocation>
</comment>
<comment type="similarity">
    <text evidence="2">Belongs to the DUP/COS family.</text>
</comment>
<comment type="caution">
    <text evidence="2">Could be the product of a pseudogene. This is the C-terminal part of a DUP240 protein in strain S288c due to a naturally occurring frameshift at position 8 compared to other strains. A complete sequence for YAR023C can be found in other strain backgrounds (AC P0CI38).</text>
</comment>
<gene>
    <name evidence="3" type="primary">DFP1</name>
    <name type="ordered locus">YAR023C</name>
</gene>
<proteinExistence type="uncertain"/>